<sequence>MARQTPITRYRNIGISAHIDAGKTTTTERILFYTGVSHKIGEVHDGAATMDWMEQEQERGITITSAATTCFWSGMGNQFPQHRINVIDTPGHVDFTIEVERSMRVLDGACMVYCAVGGVQPQSETVWRQANKYKVPRLAFVNKMDRTGANFFRVVEQMKTRLGANPVPIVVPIGAEDTFTGVVDLIEMKAIIWDEASQGMKFEYGEIPADLVDTAQEWRTNMVEAAAEASEELMDKYLEEGDLSKEDIIAGLRARTLASEIQVMLCGSAFKNKGVQRMLDAVIEFLPSPTEVKAIEGILDDKDETKASREASDEAPFSALAFKIMNDKFVGNLTFVRVYSGVLKQGDAVYNPVKSKRERIGRIVQMHANERQDIDEIRAGDIAACVGLKDVTTGDTLCDEKNIITLERMEFPDPVIQLAVEPKTKADQEKMSIALGRLAKEDPSFRVHTDEESGQTIIAGMGELHLDIIVDRMKREFGVEANIGKPMVAYRETIKKTVEQEGKFVRQTGGKGKFGHVYVRLEPLDVEAAGKEYEFAEEVVGGVVPKEFFGAVDKGIQERMKNGVLAGYPVVGVKAVLFDGSYHDVDSDELSFKMAGSYAFRDGFMKADPVLLEPIMKVEVETPEDYMGDIMGDLNRRRGMVQGMDDLPGGTKAIKAEVPLAEMFGYATQMRSMSQGRATYSMEFAKYAETPRNVAEGIIAKFQAGGKKGDDE</sequence>
<proteinExistence type="inferred from homology"/>
<reference key="1">
    <citation type="journal article" date="2008" name="PLoS ONE">
        <title>Comparative analysis of Acinetobacters: three genomes for three lifestyles.</title>
        <authorList>
            <person name="Vallenet D."/>
            <person name="Nordmann P."/>
            <person name="Barbe V."/>
            <person name="Poirel L."/>
            <person name="Mangenot S."/>
            <person name="Bataille E."/>
            <person name="Dossat C."/>
            <person name="Gas S."/>
            <person name="Kreimeyer A."/>
            <person name="Lenoble P."/>
            <person name="Oztas S."/>
            <person name="Poulain J."/>
            <person name="Segurens B."/>
            <person name="Robert C."/>
            <person name="Abergel C."/>
            <person name="Claverie J.-M."/>
            <person name="Raoult D."/>
            <person name="Medigue C."/>
            <person name="Weissenbach J."/>
            <person name="Cruveiller S."/>
        </authorList>
    </citation>
    <scope>NUCLEOTIDE SEQUENCE [LARGE SCALE GENOMIC DNA]</scope>
    <source>
        <strain>AYE</strain>
    </source>
</reference>
<accession>B0V8Y3</accession>
<dbReference type="EMBL" id="CU459141">
    <property type="protein sequence ID" value="CAM87769.1"/>
    <property type="molecule type" value="Genomic_DNA"/>
</dbReference>
<dbReference type="RefSeq" id="WP_000113824.1">
    <property type="nucleotide sequence ID" value="NZ_JBDGFB010000031.1"/>
</dbReference>
<dbReference type="SMR" id="B0V8Y3"/>
<dbReference type="EnsemblBacteria" id="CAM87769">
    <property type="protein sequence ID" value="CAM87769"/>
    <property type="gene ID" value="ABAYE2947"/>
</dbReference>
<dbReference type="GeneID" id="92892797"/>
<dbReference type="KEGG" id="aby:ABAYE2947"/>
<dbReference type="HOGENOM" id="CLU_002794_4_1_6"/>
<dbReference type="GO" id="GO:0005737">
    <property type="term" value="C:cytoplasm"/>
    <property type="evidence" value="ECO:0007669"/>
    <property type="project" value="UniProtKB-SubCell"/>
</dbReference>
<dbReference type="GO" id="GO:0005525">
    <property type="term" value="F:GTP binding"/>
    <property type="evidence" value="ECO:0007669"/>
    <property type="project" value="UniProtKB-UniRule"/>
</dbReference>
<dbReference type="GO" id="GO:0003924">
    <property type="term" value="F:GTPase activity"/>
    <property type="evidence" value="ECO:0007669"/>
    <property type="project" value="InterPro"/>
</dbReference>
<dbReference type="GO" id="GO:0097216">
    <property type="term" value="F:guanosine tetraphosphate binding"/>
    <property type="evidence" value="ECO:0007669"/>
    <property type="project" value="UniProtKB-ARBA"/>
</dbReference>
<dbReference type="GO" id="GO:0003746">
    <property type="term" value="F:translation elongation factor activity"/>
    <property type="evidence" value="ECO:0007669"/>
    <property type="project" value="UniProtKB-UniRule"/>
</dbReference>
<dbReference type="GO" id="GO:0032790">
    <property type="term" value="P:ribosome disassembly"/>
    <property type="evidence" value="ECO:0007669"/>
    <property type="project" value="TreeGrafter"/>
</dbReference>
<dbReference type="CDD" id="cd01886">
    <property type="entry name" value="EF-G"/>
    <property type="match status" value="1"/>
</dbReference>
<dbReference type="CDD" id="cd16262">
    <property type="entry name" value="EFG_III"/>
    <property type="match status" value="1"/>
</dbReference>
<dbReference type="CDD" id="cd01434">
    <property type="entry name" value="EFG_mtEFG1_IV"/>
    <property type="match status" value="1"/>
</dbReference>
<dbReference type="CDD" id="cd03713">
    <property type="entry name" value="EFG_mtEFG_C"/>
    <property type="match status" value="1"/>
</dbReference>
<dbReference type="CDD" id="cd04088">
    <property type="entry name" value="EFG_mtEFG_II"/>
    <property type="match status" value="1"/>
</dbReference>
<dbReference type="FunFam" id="2.40.30.10:FF:000006">
    <property type="entry name" value="Elongation factor G"/>
    <property type="match status" value="1"/>
</dbReference>
<dbReference type="FunFam" id="3.30.230.10:FF:000003">
    <property type="entry name" value="Elongation factor G"/>
    <property type="match status" value="1"/>
</dbReference>
<dbReference type="FunFam" id="3.30.70.240:FF:000001">
    <property type="entry name" value="Elongation factor G"/>
    <property type="match status" value="1"/>
</dbReference>
<dbReference type="FunFam" id="3.30.70.870:FF:000001">
    <property type="entry name" value="Elongation factor G"/>
    <property type="match status" value="1"/>
</dbReference>
<dbReference type="FunFam" id="3.40.50.300:FF:000029">
    <property type="entry name" value="Elongation factor G"/>
    <property type="match status" value="1"/>
</dbReference>
<dbReference type="Gene3D" id="3.30.230.10">
    <property type="match status" value="1"/>
</dbReference>
<dbReference type="Gene3D" id="3.30.70.240">
    <property type="match status" value="1"/>
</dbReference>
<dbReference type="Gene3D" id="3.30.70.870">
    <property type="entry name" value="Elongation Factor G (Translational Gtpase), domain 3"/>
    <property type="match status" value="1"/>
</dbReference>
<dbReference type="Gene3D" id="3.40.50.300">
    <property type="entry name" value="P-loop containing nucleotide triphosphate hydrolases"/>
    <property type="match status" value="1"/>
</dbReference>
<dbReference type="Gene3D" id="2.40.30.10">
    <property type="entry name" value="Translation factors"/>
    <property type="match status" value="1"/>
</dbReference>
<dbReference type="HAMAP" id="MF_00054_B">
    <property type="entry name" value="EF_G_EF_2_B"/>
    <property type="match status" value="1"/>
</dbReference>
<dbReference type="InterPro" id="IPR041095">
    <property type="entry name" value="EFG_II"/>
</dbReference>
<dbReference type="InterPro" id="IPR009022">
    <property type="entry name" value="EFG_III"/>
</dbReference>
<dbReference type="InterPro" id="IPR035647">
    <property type="entry name" value="EFG_III/V"/>
</dbReference>
<dbReference type="InterPro" id="IPR047872">
    <property type="entry name" value="EFG_IV"/>
</dbReference>
<dbReference type="InterPro" id="IPR035649">
    <property type="entry name" value="EFG_V"/>
</dbReference>
<dbReference type="InterPro" id="IPR000640">
    <property type="entry name" value="EFG_V-like"/>
</dbReference>
<dbReference type="InterPro" id="IPR004161">
    <property type="entry name" value="EFTu-like_2"/>
</dbReference>
<dbReference type="InterPro" id="IPR031157">
    <property type="entry name" value="G_TR_CS"/>
</dbReference>
<dbReference type="InterPro" id="IPR027417">
    <property type="entry name" value="P-loop_NTPase"/>
</dbReference>
<dbReference type="InterPro" id="IPR020568">
    <property type="entry name" value="Ribosomal_Su5_D2-typ_SF"/>
</dbReference>
<dbReference type="InterPro" id="IPR014721">
    <property type="entry name" value="Ribsml_uS5_D2-typ_fold_subgr"/>
</dbReference>
<dbReference type="InterPro" id="IPR005225">
    <property type="entry name" value="Small_GTP-bd"/>
</dbReference>
<dbReference type="InterPro" id="IPR000795">
    <property type="entry name" value="T_Tr_GTP-bd_dom"/>
</dbReference>
<dbReference type="InterPro" id="IPR009000">
    <property type="entry name" value="Transl_B-barrel_sf"/>
</dbReference>
<dbReference type="InterPro" id="IPR004540">
    <property type="entry name" value="Transl_elong_EFG/EF2"/>
</dbReference>
<dbReference type="InterPro" id="IPR005517">
    <property type="entry name" value="Transl_elong_EFG/EF2_IV"/>
</dbReference>
<dbReference type="NCBIfam" id="TIGR00484">
    <property type="entry name" value="EF-G"/>
    <property type="match status" value="1"/>
</dbReference>
<dbReference type="NCBIfam" id="NF009381">
    <property type="entry name" value="PRK12740.1-5"/>
    <property type="match status" value="1"/>
</dbReference>
<dbReference type="NCBIfam" id="TIGR00231">
    <property type="entry name" value="small_GTP"/>
    <property type="match status" value="1"/>
</dbReference>
<dbReference type="PANTHER" id="PTHR43261:SF1">
    <property type="entry name" value="RIBOSOME-RELEASING FACTOR 2, MITOCHONDRIAL"/>
    <property type="match status" value="1"/>
</dbReference>
<dbReference type="PANTHER" id="PTHR43261">
    <property type="entry name" value="TRANSLATION ELONGATION FACTOR G-RELATED"/>
    <property type="match status" value="1"/>
</dbReference>
<dbReference type="Pfam" id="PF00679">
    <property type="entry name" value="EFG_C"/>
    <property type="match status" value="1"/>
</dbReference>
<dbReference type="Pfam" id="PF14492">
    <property type="entry name" value="EFG_III"/>
    <property type="match status" value="1"/>
</dbReference>
<dbReference type="Pfam" id="PF03764">
    <property type="entry name" value="EFG_IV"/>
    <property type="match status" value="1"/>
</dbReference>
<dbReference type="Pfam" id="PF00009">
    <property type="entry name" value="GTP_EFTU"/>
    <property type="match status" value="1"/>
</dbReference>
<dbReference type="Pfam" id="PF03144">
    <property type="entry name" value="GTP_EFTU_D2"/>
    <property type="match status" value="1"/>
</dbReference>
<dbReference type="PRINTS" id="PR00315">
    <property type="entry name" value="ELONGATNFCT"/>
</dbReference>
<dbReference type="SMART" id="SM00838">
    <property type="entry name" value="EFG_C"/>
    <property type="match status" value="1"/>
</dbReference>
<dbReference type="SMART" id="SM00889">
    <property type="entry name" value="EFG_IV"/>
    <property type="match status" value="1"/>
</dbReference>
<dbReference type="SUPFAM" id="SSF54980">
    <property type="entry name" value="EF-G C-terminal domain-like"/>
    <property type="match status" value="2"/>
</dbReference>
<dbReference type="SUPFAM" id="SSF52540">
    <property type="entry name" value="P-loop containing nucleoside triphosphate hydrolases"/>
    <property type="match status" value="1"/>
</dbReference>
<dbReference type="SUPFAM" id="SSF54211">
    <property type="entry name" value="Ribosomal protein S5 domain 2-like"/>
    <property type="match status" value="1"/>
</dbReference>
<dbReference type="SUPFAM" id="SSF50447">
    <property type="entry name" value="Translation proteins"/>
    <property type="match status" value="1"/>
</dbReference>
<dbReference type="PROSITE" id="PS00301">
    <property type="entry name" value="G_TR_1"/>
    <property type="match status" value="1"/>
</dbReference>
<dbReference type="PROSITE" id="PS51722">
    <property type="entry name" value="G_TR_2"/>
    <property type="match status" value="1"/>
</dbReference>
<evidence type="ECO:0000255" key="1">
    <source>
        <dbReference type="HAMAP-Rule" id="MF_00054"/>
    </source>
</evidence>
<gene>
    <name evidence="1" type="primary">fusA</name>
    <name type="ordered locus">ABAYE2947</name>
</gene>
<comment type="function">
    <text evidence="1">Catalyzes the GTP-dependent ribosomal translocation step during translation elongation. During this step, the ribosome changes from the pre-translocational (PRE) to the post-translocational (POST) state as the newly formed A-site-bound peptidyl-tRNA and P-site-bound deacylated tRNA move to the P and E sites, respectively. Catalyzes the coordinated movement of the two tRNA molecules, the mRNA and conformational changes in the ribosome.</text>
</comment>
<comment type="subcellular location">
    <subcellularLocation>
        <location evidence="1">Cytoplasm</location>
    </subcellularLocation>
</comment>
<comment type="similarity">
    <text evidence="1">Belongs to the TRAFAC class translation factor GTPase superfamily. Classic translation factor GTPase family. EF-G/EF-2 subfamily.</text>
</comment>
<organism>
    <name type="scientific">Acinetobacter baumannii (strain AYE)</name>
    <dbReference type="NCBI Taxonomy" id="509173"/>
    <lineage>
        <taxon>Bacteria</taxon>
        <taxon>Pseudomonadati</taxon>
        <taxon>Pseudomonadota</taxon>
        <taxon>Gammaproteobacteria</taxon>
        <taxon>Moraxellales</taxon>
        <taxon>Moraxellaceae</taxon>
        <taxon>Acinetobacter</taxon>
        <taxon>Acinetobacter calcoaceticus/baumannii complex</taxon>
    </lineage>
</organism>
<protein>
    <recommendedName>
        <fullName evidence="1">Elongation factor G</fullName>
        <shortName evidence="1">EF-G</shortName>
    </recommendedName>
</protein>
<name>EFG_ACIBY</name>
<keyword id="KW-0963">Cytoplasm</keyword>
<keyword id="KW-0251">Elongation factor</keyword>
<keyword id="KW-0342">GTP-binding</keyword>
<keyword id="KW-0547">Nucleotide-binding</keyword>
<keyword id="KW-0648">Protein biosynthesis</keyword>
<feature type="chain" id="PRO_1000091687" description="Elongation factor G">
    <location>
        <begin position="1"/>
        <end position="712"/>
    </location>
</feature>
<feature type="domain" description="tr-type G">
    <location>
        <begin position="8"/>
        <end position="290"/>
    </location>
</feature>
<feature type="binding site" evidence="1">
    <location>
        <begin position="17"/>
        <end position="24"/>
    </location>
    <ligand>
        <name>GTP</name>
        <dbReference type="ChEBI" id="CHEBI:37565"/>
    </ligand>
</feature>
<feature type="binding site" evidence="1">
    <location>
        <begin position="88"/>
        <end position="92"/>
    </location>
    <ligand>
        <name>GTP</name>
        <dbReference type="ChEBI" id="CHEBI:37565"/>
    </ligand>
</feature>
<feature type="binding site" evidence="1">
    <location>
        <begin position="142"/>
        <end position="145"/>
    </location>
    <ligand>
        <name>GTP</name>
        <dbReference type="ChEBI" id="CHEBI:37565"/>
    </ligand>
</feature>